<evidence type="ECO:0000250" key="1">
    <source>
        <dbReference type="UniProtKB" id="Q7TSA6"/>
    </source>
</evidence>
<evidence type="ECO:0000255" key="2"/>
<evidence type="ECO:0000256" key="3">
    <source>
        <dbReference type="SAM" id="MobiDB-lite"/>
    </source>
</evidence>
<evidence type="ECO:0000269" key="4">
    <source>
    </source>
</evidence>
<evidence type="ECO:0000303" key="5">
    <source>
    </source>
</evidence>
<evidence type="ECO:0000303" key="6">
    <source>
    </source>
</evidence>
<evidence type="ECO:0000303" key="7">
    <source>
    </source>
</evidence>
<evidence type="ECO:0000305" key="8"/>
<name>PRSR3_HUMAN</name>
<accession>Q2NL68</accession>
<accession>Q8NDI3</accession>
<accession>Q8WWC8</accession>
<accession>Q96NL4</accession>
<dbReference type="EMBL" id="AK055219">
    <property type="protein sequence ID" value="BAB70878.1"/>
    <property type="molecule type" value="mRNA"/>
</dbReference>
<dbReference type="EMBL" id="AL833894">
    <property type="protein sequence ID" value="CAD38750.2"/>
    <property type="molecule type" value="mRNA"/>
</dbReference>
<dbReference type="EMBL" id="AC002398">
    <property type="status" value="NOT_ANNOTATED_CDS"/>
    <property type="molecule type" value="Genomic_DNA"/>
</dbReference>
<dbReference type="EMBL" id="BC017947">
    <property type="protein sequence ID" value="AAH17947.1"/>
    <property type="status" value="ALT_INIT"/>
    <property type="molecule type" value="mRNA"/>
</dbReference>
<dbReference type="EMBL" id="BC110893">
    <property type="protein sequence ID" value="AAI10894.1"/>
    <property type="molecule type" value="mRNA"/>
</dbReference>
<dbReference type="CCDS" id="CCDS46056.2">
    <molecule id="Q2NL68-1"/>
</dbReference>
<dbReference type="RefSeq" id="NP_001034976.2">
    <molecule id="Q2NL68-1"/>
    <property type="nucleotide sequence ID" value="NM_001039887.3"/>
</dbReference>
<dbReference type="RefSeq" id="XP_011524838.1">
    <molecule id="Q2NL68-2"/>
    <property type="nucleotide sequence ID" value="XM_011526536.4"/>
</dbReference>
<dbReference type="RefSeq" id="XP_054175960.1">
    <molecule id="Q2NL68-2"/>
    <property type="nucleotide sequence ID" value="XM_054319985.1"/>
</dbReference>
<dbReference type="BioGRID" id="127121">
    <property type="interactions" value="20"/>
</dbReference>
<dbReference type="FunCoup" id="Q2NL68">
    <property type="interactions" value="178"/>
</dbReference>
<dbReference type="IntAct" id="Q2NL68">
    <property type="interactions" value="13"/>
</dbReference>
<dbReference type="STRING" id="9606.ENSP00000380116"/>
<dbReference type="GlyCosmos" id="Q2NL68">
    <property type="glycosylation" value="1 site, 1 glycan"/>
</dbReference>
<dbReference type="GlyGen" id="Q2NL68">
    <property type="glycosylation" value="5 sites, 1 O-linked glycan (1 site)"/>
</dbReference>
<dbReference type="iPTMnet" id="Q2NL68"/>
<dbReference type="PhosphoSitePlus" id="Q2NL68"/>
<dbReference type="BioMuta" id="PROSER3"/>
<dbReference type="DMDM" id="121941602"/>
<dbReference type="jPOST" id="Q2NL68"/>
<dbReference type="MassIVE" id="Q2NL68"/>
<dbReference type="PaxDb" id="9606-ENSP00000380116"/>
<dbReference type="PeptideAtlas" id="Q2NL68"/>
<dbReference type="ProteomicsDB" id="61420">
    <molecule id="Q2NL68-1"/>
</dbReference>
<dbReference type="ProteomicsDB" id="61421">
    <molecule id="Q2NL68-2"/>
</dbReference>
<dbReference type="ProteomicsDB" id="61422">
    <molecule id="Q2NL68-3"/>
</dbReference>
<dbReference type="ProteomicsDB" id="61423">
    <molecule id="Q2NL68-4"/>
</dbReference>
<dbReference type="Antibodypedia" id="44565">
    <property type="antibodies" value="35 antibodies from 12 providers"/>
</dbReference>
<dbReference type="DNASU" id="148137"/>
<dbReference type="Ensembl" id="ENST00000396908.9">
    <molecule id="Q2NL68-1"/>
    <property type="protein sequence ID" value="ENSP00000380116.5"/>
    <property type="gene ID" value="ENSG00000167595.16"/>
</dbReference>
<dbReference type="Ensembl" id="ENST00000536950.5">
    <molecule id="Q2NL68-3"/>
    <property type="protein sequence ID" value="ENSP00000466822.1"/>
    <property type="gene ID" value="ENSG00000167595.16"/>
</dbReference>
<dbReference type="Ensembl" id="ENST00000537459.5">
    <molecule id="Q2NL68-4"/>
    <property type="protein sequence ID" value="ENSP00000439886.2"/>
    <property type="gene ID" value="ENSG00000167595.16"/>
</dbReference>
<dbReference type="Ensembl" id="ENST00000620918.4">
    <molecule id="Q2NL68-2"/>
    <property type="protein sequence ID" value="ENSP00000482508.1"/>
    <property type="gene ID" value="ENSG00000167595.16"/>
</dbReference>
<dbReference type="GeneID" id="148137"/>
<dbReference type="KEGG" id="hsa:148137"/>
<dbReference type="UCSC" id="uc002obo.2">
    <molecule id="Q2NL68-1"/>
    <property type="organism name" value="human"/>
</dbReference>
<dbReference type="AGR" id="HGNC:25204"/>
<dbReference type="CTD" id="148137"/>
<dbReference type="DisGeNET" id="148137"/>
<dbReference type="GeneCards" id="PROSER3"/>
<dbReference type="HGNC" id="HGNC:25204">
    <property type="gene designation" value="PROSER3"/>
</dbReference>
<dbReference type="HPA" id="ENSG00000167595">
    <property type="expression patterns" value="Low tissue specificity"/>
</dbReference>
<dbReference type="neXtProt" id="NX_Q2NL68"/>
<dbReference type="OpenTargets" id="ENSG00000167595"/>
<dbReference type="PharmGKB" id="PA162378639"/>
<dbReference type="VEuPathDB" id="HostDB:ENSG00000167595"/>
<dbReference type="eggNOG" id="ENOG502S6GS">
    <property type="taxonomic scope" value="Eukaryota"/>
</dbReference>
<dbReference type="GeneTree" id="ENSGT00390000001986"/>
<dbReference type="HOGENOM" id="CLU_022718_0_0_1"/>
<dbReference type="InParanoid" id="Q2NL68"/>
<dbReference type="OMA" id="SPPGFFW"/>
<dbReference type="OrthoDB" id="10043502at2759"/>
<dbReference type="PAN-GO" id="Q2NL68">
    <property type="GO annotations" value="0 GO annotations based on evolutionary models"/>
</dbReference>
<dbReference type="PhylomeDB" id="Q2NL68"/>
<dbReference type="PathwayCommons" id="Q2NL68"/>
<dbReference type="SignaLink" id="Q2NL68"/>
<dbReference type="BioGRID-ORCS" id="148137">
    <property type="hits" value="4 hits in 283 CRISPR screens"/>
</dbReference>
<dbReference type="GenomeRNAi" id="148137"/>
<dbReference type="Pharos" id="Q2NL68">
    <property type="development level" value="Tdark"/>
</dbReference>
<dbReference type="PRO" id="PR:Q2NL68"/>
<dbReference type="Proteomes" id="UP000005640">
    <property type="component" value="Chromosome 19"/>
</dbReference>
<dbReference type="RNAct" id="Q2NL68">
    <property type="molecule type" value="protein"/>
</dbReference>
<dbReference type="Bgee" id="ENSG00000167595">
    <property type="expression patterns" value="Expressed in buccal mucosa cell and 105 other cell types or tissues"/>
</dbReference>
<dbReference type="ExpressionAtlas" id="Q2NL68">
    <property type="expression patterns" value="baseline and differential"/>
</dbReference>
<dbReference type="GO" id="GO:0005813">
    <property type="term" value="C:centrosome"/>
    <property type="evidence" value="ECO:0000314"/>
    <property type="project" value="UniProtKB"/>
</dbReference>
<dbReference type="GO" id="GO:0005737">
    <property type="term" value="C:cytoplasm"/>
    <property type="evidence" value="ECO:0007669"/>
    <property type="project" value="UniProtKB-KW"/>
</dbReference>
<dbReference type="InterPro" id="IPR037646">
    <property type="entry name" value="PROSER3"/>
</dbReference>
<dbReference type="PANTHER" id="PTHR22045">
    <property type="entry name" value="PROLINE AND SERINE-RICH PROTEIN 3"/>
    <property type="match status" value="1"/>
</dbReference>
<dbReference type="PANTHER" id="PTHR22045:SF6">
    <property type="entry name" value="PROLINE AND SERINE-RICH PROTEIN 3"/>
    <property type="match status" value="1"/>
</dbReference>
<sequence length="480" mass="51075">MDRSLPVFSIQDSPFGDAPLGRSHYWPSQSQTWCPKTLSPSRSQRSRLPQAPKALATGPNSPELFEESWPSSSGTPSLPSTTEGQMWASPAPTLIDSGDSVVAKYINRFRQAQPTSREERQPAGPTPADFWWLQSDSPDPSSQSAAAGANKPEGRPHTAVPTAVNVTSASHAVAPLQEIKQNLHTWNSSLLDLETLSLQSRAARLLKRSKASISSSSSLSPSDASTSSFPTSSDGLSPFSETFIPDSSKGLGPRAPASPAPAQAQTPTPAPAPASSQAPLRPEDDILYQWRQRRKLEQAQGSKGDRAWVPPLTPALRTLAESLKAKALPPAAGSVIRKSEATPSPGACLQPEVPLSPAEQATTVKASPPAFQVGSPEALAPPPPAADHAPSEALLAQAALLLQAAEDSDGSEFQDDPVLQVLRAHRAELSRQKREADARLSFLLDQAEDLGSWSPPAGSPPRSPRRLLRREGDSLEARRL</sequence>
<proteinExistence type="evidence at protein level"/>
<organism>
    <name type="scientific">Homo sapiens</name>
    <name type="common">Human</name>
    <dbReference type="NCBI Taxonomy" id="9606"/>
    <lineage>
        <taxon>Eukaryota</taxon>
        <taxon>Metazoa</taxon>
        <taxon>Chordata</taxon>
        <taxon>Craniata</taxon>
        <taxon>Vertebrata</taxon>
        <taxon>Euteleostomi</taxon>
        <taxon>Mammalia</taxon>
        <taxon>Eutheria</taxon>
        <taxon>Euarchontoglires</taxon>
        <taxon>Primates</taxon>
        <taxon>Haplorrhini</taxon>
        <taxon>Catarrhini</taxon>
        <taxon>Hominidae</taxon>
        <taxon>Homo</taxon>
    </lineage>
</organism>
<keyword id="KW-0025">Alternative splicing</keyword>
<keyword id="KW-0175">Coiled coil</keyword>
<keyword id="KW-0963">Cytoplasm</keyword>
<keyword id="KW-0206">Cytoskeleton</keyword>
<keyword id="KW-0597">Phosphoprotein</keyword>
<keyword id="KW-1267">Proteomics identification</keyword>
<keyword id="KW-1185">Reference proteome</keyword>
<protein>
    <recommendedName>
        <fullName>Proline and serine-rich protein 3</fullName>
    </recommendedName>
</protein>
<gene>
    <name type="primary">PROSER3</name>
    <name type="synonym">C19orf55</name>
</gene>
<reference key="1">
    <citation type="journal article" date="2004" name="Nat. Genet.">
        <title>Complete sequencing and characterization of 21,243 full-length human cDNAs.</title>
        <authorList>
            <person name="Ota T."/>
            <person name="Suzuki Y."/>
            <person name="Nishikawa T."/>
            <person name="Otsuki T."/>
            <person name="Sugiyama T."/>
            <person name="Irie R."/>
            <person name="Wakamatsu A."/>
            <person name="Hayashi K."/>
            <person name="Sato H."/>
            <person name="Nagai K."/>
            <person name="Kimura K."/>
            <person name="Makita H."/>
            <person name="Sekine M."/>
            <person name="Obayashi M."/>
            <person name="Nishi T."/>
            <person name="Shibahara T."/>
            <person name="Tanaka T."/>
            <person name="Ishii S."/>
            <person name="Yamamoto J."/>
            <person name="Saito K."/>
            <person name="Kawai Y."/>
            <person name="Isono Y."/>
            <person name="Nakamura Y."/>
            <person name="Nagahari K."/>
            <person name="Murakami K."/>
            <person name="Yasuda T."/>
            <person name="Iwayanagi T."/>
            <person name="Wagatsuma M."/>
            <person name="Shiratori A."/>
            <person name="Sudo H."/>
            <person name="Hosoiri T."/>
            <person name="Kaku Y."/>
            <person name="Kodaira H."/>
            <person name="Kondo H."/>
            <person name="Sugawara M."/>
            <person name="Takahashi M."/>
            <person name="Kanda K."/>
            <person name="Yokoi T."/>
            <person name="Furuya T."/>
            <person name="Kikkawa E."/>
            <person name="Omura Y."/>
            <person name="Abe K."/>
            <person name="Kamihara K."/>
            <person name="Katsuta N."/>
            <person name="Sato K."/>
            <person name="Tanikawa M."/>
            <person name="Yamazaki M."/>
            <person name="Ninomiya K."/>
            <person name="Ishibashi T."/>
            <person name="Yamashita H."/>
            <person name="Murakawa K."/>
            <person name="Fujimori K."/>
            <person name="Tanai H."/>
            <person name="Kimata M."/>
            <person name="Watanabe M."/>
            <person name="Hiraoka S."/>
            <person name="Chiba Y."/>
            <person name="Ishida S."/>
            <person name="Ono Y."/>
            <person name="Takiguchi S."/>
            <person name="Watanabe S."/>
            <person name="Yosida M."/>
            <person name="Hotuta T."/>
            <person name="Kusano J."/>
            <person name="Kanehori K."/>
            <person name="Takahashi-Fujii A."/>
            <person name="Hara H."/>
            <person name="Tanase T.-O."/>
            <person name="Nomura Y."/>
            <person name="Togiya S."/>
            <person name="Komai F."/>
            <person name="Hara R."/>
            <person name="Takeuchi K."/>
            <person name="Arita M."/>
            <person name="Imose N."/>
            <person name="Musashino K."/>
            <person name="Yuuki H."/>
            <person name="Oshima A."/>
            <person name="Sasaki N."/>
            <person name="Aotsuka S."/>
            <person name="Yoshikawa Y."/>
            <person name="Matsunawa H."/>
            <person name="Ichihara T."/>
            <person name="Shiohata N."/>
            <person name="Sano S."/>
            <person name="Moriya S."/>
            <person name="Momiyama H."/>
            <person name="Satoh N."/>
            <person name="Takami S."/>
            <person name="Terashima Y."/>
            <person name="Suzuki O."/>
            <person name="Nakagawa S."/>
            <person name="Senoh A."/>
            <person name="Mizoguchi H."/>
            <person name="Goto Y."/>
            <person name="Shimizu F."/>
            <person name="Wakebe H."/>
            <person name="Hishigaki H."/>
            <person name="Watanabe T."/>
            <person name="Sugiyama A."/>
            <person name="Takemoto M."/>
            <person name="Kawakami B."/>
            <person name="Yamazaki M."/>
            <person name="Watanabe K."/>
            <person name="Kumagai A."/>
            <person name="Itakura S."/>
            <person name="Fukuzumi Y."/>
            <person name="Fujimori Y."/>
            <person name="Komiyama M."/>
            <person name="Tashiro H."/>
            <person name="Tanigami A."/>
            <person name="Fujiwara T."/>
            <person name="Ono T."/>
            <person name="Yamada K."/>
            <person name="Fujii Y."/>
            <person name="Ozaki K."/>
            <person name="Hirao M."/>
            <person name="Ohmori Y."/>
            <person name="Kawabata A."/>
            <person name="Hikiji T."/>
            <person name="Kobatake N."/>
            <person name="Inagaki H."/>
            <person name="Ikema Y."/>
            <person name="Okamoto S."/>
            <person name="Okitani R."/>
            <person name="Kawakami T."/>
            <person name="Noguchi S."/>
            <person name="Itoh T."/>
            <person name="Shigeta K."/>
            <person name="Senba T."/>
            <person name="Matsumura K."/>
            <person name="Nakajima Y."/>
            <person name="Mizuno T."/>
            <person name="Morinaga M."/>
            <person name="Sasaki M."/>
            <person name="Togashi T."/>
            <person name="Oyama M."/>
            <person name="Hata H."/>
            <person name="Watanabe M."/>
            <person name="Komatsu T."/>
            <person name="Mizushima-Sugano J."/>
            <person name="Satoh T."/>
            <person name="Shirai Y."/>
            <person name="Takahashi Y."/>
            <person name="Nakagawa K."/>
            <person name="Okumura K."/>
            <person name="Nagase T."/>
            <person name="Nomura N."/>
            <person name="Kikuchi H."/>
            <person name="Masuho Y."/>
            <person name="Yamashita R."/>
            <person name="Nakai K."/>
            <person name="Yada T."/>
            <person name="Nakamura Y."/>
            <person name="Ohara O."/>
            <person name="Isogai T."/>
            <person name="Sugano S."/>
        </authorList>
    </citation>
    <scope>NUCLEOTIDE SEQUENCE [LARGE SCALE MRNA] (ISOFORM 2)</scope>
</reference>
<reference key="2">
    <citation type="journal article" date="2007" name="BMC Genomics">
        <title>The full-ORF clone resource of the German cDNA consortium.</title>
        <authorList>
            <person name="Bechtel S."/>
            <person name="Rosenfelder H."/>
            <person name="Duda A."/>
            <person name="Schmidt C.P."/>
            <person name="Ernst U."/>
            <person name="Wellenreuther R."/>
            <person name="Mehrle A."/>
            <person name="Schuster C."/>
            <person name="Bahr A."/>
            <person name="Bloecker H."/>
            <person name="Heubner D."/>
            <person name="Hoerlein A."/>
            <person name="Michel G."/>
            <person name="Wedler H."/>
            <person name="Koehrer K."/>
            <person name="Ottenwaelder B."/>
            <person name="Poustka A."/>
            <person name="Wiemann S."/>
            <person name="Schupp I."/>
        </authorList>
    </citation>
    <scope>NUCLEOTIDE SEQUENCE [LARGE SCALE MRNA] (ISOFORM 3)</scope>
    <source>
        <tissue>Testis</tissue>
    </source>
</reference>
<reference key="3">
    <citation type="journal article" date="2004" name="Nature">
        <title>The DNA sequence and biology of human chromosome 19.</title>
        <authorList>
            <person name="Grimwood J."/>
            <person name="Gordon L.A."/>
            <person name="Olsen A.S."/>
            <person name="Terry A."/>
            <person name="Schmutz J."/>
            <person name="Lamerdin J.E."/>
            <person name="Hellsten U."/>
            <person name="Goodstein D."/>
            <person name="Couronne O."/>
            <person name="Tran-Gyamfi M."/>
            <person name="Aerts A."/>
            <person name="Altherr M."/>
            <person name="Ashworth L."/>
            <person name="Bajorek E."/>
            <person name="Black S."/>
            <person name="Branscomb E."/>
            <person name="Caenepeel S."/>
            <person name="Carrano A.V."/>
            <person name="Caoile C."/>
            <person name="Chan Y.M."/>
            <person name="Christensen M."/>
            <person name="Cleland C.A."/>
            <person name="Copeland A."/>
            <person name="Dalin E."/>
            <person name="Dehal P."/>
            <person name="Denys M."/>
            <person name="Detter J.C."/>
            <person name="Escobar J."/>
            <person name="Flowers D."/>
            <person name="Fotopulos D."/>
            <person name="Garcia C."/>
            <person name="Georgescu A.M."/>
            <person name="Glavina T."/>
            <person name="Gomez M."/>
            <person name="Gonzales E."/>
            <person name="Groza M."/>
            <person name="Hammon N."/>
            <person name="Hawkins T."/>
            <person name="Haydu L."/>
            <person name="Ho I."/>
            <person name="Huang W."/>
            <person name="Israni S."/>
            <person name="Jett J."/>
            <person name="Kadner K."/>
            <person name="Kimball H."/>
            <person name="Kobayashi A."/>
            <person name="Larionov V."/>
            <person name="Leem S.-H."/>
            <person name="Lopez F."/>
            <person name="Lou Y."/>
            <person name="Lowry S."/>
            <person name="Malfatti S."/>
            <person name="Martinez D."/>
            <person name="McCready P.M."/>
            <person name="Medina C."/>
            <person name="Morgan J."/>
            <person name="Nelson K."/>
            <person name="Nolan M."/>
            <person name="Ovcharenko I."/>
            <person name="Pitluck S."/>
            <person name="Pollard M."/>
            <person name="Popkie A.P."/>
            <person name="Predki P."/>
            <person name="Quan G."/>
            <person name="Ramirez L."/>
            <person name="Rash S."/>
            <person name="Retterer J."/>
            <person name="Rodriguez A."/>
            <person name="Rogers S."/>
            <person name="Salamov A."/>
            <person name="Salazar A."/>
            <person name="She X."/>
            <person name="Smith D."/>
            <person name="Slezak T."/>
            <person name="Solovyev V."/>
            <person name="Thayer N."/>
            <person name="Tice H."/>
            <person name="Tsai M."/>
            <person name="Ustaszewska A."/>
            <person name="Vo N."/>
            <person name="Wagner M."/>
            <person name="Wheeler J."/>
            <person name="Wu K."/>
            <person name="Xie G."/>
            <person name="Yang J."/>
            <person name="Dubchak I."/>
            <person name="Furey T.S."/>
            <person name="DeJong P."/>
            <person name="Dickson M."/>
            <person name="Gordon D."/>
            <person name="Eichler E.E."/>
            <person name="Pennacchio L.A."/>
            <person name="Richardson P."/>
            <person name="Stubbs L."/>
            <person name="Rokhsar D.S."/>
            <person name="Myers R.M."/>
            <person name="Rubin E.M."/>
            <person name="Lucas S.M."/>
        </authorList>
    </citation>
    <scope>NUCLEOTIDE SEQUENCE [LARGE SCALE GENOMIC DNA]</scope>
</reference>
<reference key="4">
    <citation type="journal article" date="2004" name="Genome Res.">
        <title>The status, quality, and expansion of the NIH full-length cDNA project: the Mammalian Gene Collection (MGC).</title>
        <authorList>
            <consortium name="The MGC Project Team"/>
        </authorList>
    </citation>
    <scope>NUCLEOTIDE SEQUENCE [LARGE SCALE MRNA] (ISOFORMS 1 AND 4)</scope>
    <source>
        <tissue>Prostate</tissue>
        <tissue>Uterus</tissue>
    </source>
</reference>
<reference key="5">
    <citation type="journal article" date="2015" name="Cell">
        <title>A Dynamic Protein Interaction Landscape of the Human Centrosome-Cilium Interface.</title>
        <authorList>
            <person name="Gupta G.D."/>
            <person name="Coyaud E."/>
            <person name="Goncalves J."/>
            <person name="Mojarad B.A."/>
            <person name="Liu Y."/>
            <person name="Wu Q."/>
            <person name="Gheiratmand L."/>
            <person name="Comartin D."/>
            <person name="Tkach J.M."/>
            <person name="Cheung S.W."/>
            <person name="Bashkurov M."/>
            <person name="Hasegan M."/>
            <person name="Knight J.D."/>
            <person name="Lin Z.Y."/>
            <person name="Schueler M."/>
            <person name="Hildebrandt F."/>
            <person name="Moffat J."/>
            <person name="Gingras A.C."/>
            <person name="Raught B."/>
            <person name="Pelletier L."/>
        </authorList>
    </citation>
    <scope>SUBCELLULAR LOCATION</scope>
</reference>
<comment type="interaction">
    <interactant intactId="EBI-11336487">
        <id>Q2NL68</id>
    </interactant>
    <interactant intactId="EBI-10749669">
        <id>Q8IYE0</id>
        <label>CCDC146</label>
    </interactant>
    <organismsDiffer>false</organismsDiffer>
    <experiments>3</experiments>
</comment>
<comment type="interaction">
    <interactant intactId="EBI-11336487">
        <id>Q2NL68</id>
    </interactant>
    <interactant intactId="EBI-10961624">
        <id>Q2TAC2-2</id>
        <label>CCDC57</label>
    </interactant>
    <organismsDiffer>false</organismsDiffer>
    <experiments>3</experiments>
</comment>
<comment type="interaction">
    <interactant intactId="EBI-11336487">
        <id>Q2NL68</id>
    </interactant>
    <interactant intactId="EBI-10175300">
        <id>Q8TD31-3</id>
        <label>CCHCR1</label>
    </interactant>
    <organismsDiffer>false</organismsDiffer>
    <experiments>5</experiments>
</comment>
<comment type="interaction">
    <interactant intactId="EBI-11336487">
        <id>Q2NL68</id>
    </interactant>
    <interactant intactId="EBI-396137">
        <id>Q9UJX2</id>
        <label>CDC23</label>
    </interactant>
    <organismsDiffer>false</organismsDiffer>
    <experiments>3</experiments>
</comment>
<comment type="interaction">
    <interactant intactId="EBI-11336487">
        <id>Q2NL68</id>
    </interactant>
    <interactant intactId="EBI-12206419">
        <id>Q4KMZ1</id>
        <label>IQCC</label>
    </interactant>
    <organismsDiffer>false</organismsDiffer>
    <experiments>3</experiments>
</comment>
<comment type="interaction">
    <interactant intactId="EBI-11336487">
        <id>Q2NL68</id>
    </interactant>
    <interactant intactId="EBI-744782">
        <id>Q9Y5B8</id>
        <label>NME7</label>
    </interactant>
    <organismsDiffer>false</organismsDiffer>
    <experiments>5</experiments>
</comment>
<comment type="interaction">
    <interactant intactId="EBI-11336487">
        <id>Q2NL68</id>
    </interactant>
    <interactant intactId="EBI-743117">
        <id>Q96ES7</id>
        <label>SGF29</label>
    </interactant>
    <organismsDiffer>false</organismsDiffer>
    <experiments>3</experiments>
</comment>
<comment type="interaction">
    <interactant intactId="EBI-11336487">
        <id>Q2NL68</id>
    </interactant>
    <interactant intactId="EBI-12328453">
        <id>Q96N95-3</id>
        <label>ZNF396</label>
    </interactant>
    <organismsDiffer>false</organismsDiffer>
    <experiments>5</experiments>
</comment>
<comment type="subcellular location">
    <subcellularLocation>
        <location evidence="4">Cytoplasm</location>
        <location evidence="4">Cytoskeleton</location>
        <location evidence="4">Microtubule organizing center</location>
        <location evidence="4">Centrosome</location>
    </subcellularLocation>
</comment>
<comment type="alternative products">
    <event type="alternative splicing"/>
    <isoform>
        <id>Q2NL68-1</id>
        <name>1</name>
        <sequence type="displayed"/>
    </isoform>
    <isoform>
        <id>Q2NL68-2</id>
        <name>2</name>
        <sequence type="described" ref="VSP_027698 VSP_027701 VSP_027702 VSP_027703"/>
    </isoform>
    <isoform>
        <id>Q2NL68-3</id>
        <name>3</name>
        <sequence type="described" ref="VSP_027698 VSP_027699 VSP_027700"/>
    </isoform>
    <isoform>
        <id>Q2NL68-4</id>
        <name>4</name>
        <sequence type="described" ref="VSP_027699 VSP_027700"/>
    </isoform>
</comment>
<comment type="sequence caution" evidence="8">
    <conflict type="erroneous initiation">
        <sequence resource="EMBL-CDS" id="AAH17947"/>
    </conflict>
    <text>Extended N-terminus.</text>
</comment>
<feature type="chain" id="PRO_0000299482" description="Proline and serine-rich protein 3">
    <location>
        <begin position="1"/>
        <end position="480"/>
    </location>
</feature>
<feature type="region of interest" description="Disordered" evidence="3">
    <location>
        <begin position="1"/>
        <end position="94"/>
    </location>
</feature>
<feature type="region of interest" description="Disordered" evidence="3">
    <location>
        <begin position="111"/>
        <end position="166"/>
    </location>
</feature>
<feature type="region of interest" description="Disordered" evidence="3">
    <location>
        <begin position="207"/>
        <end position="310"/>
    </location>
</feature>
<feature type="region of interest" description="Disordered" evidence="3">
    <location>
        <begin position="336"/>
        <end position="392"/>
    </location>
</feature>
<feature type="region of interest" description="Disordered" evidence="3">
    <location>
        <begin position="448"/>
        <end position="480"/>
    </location>
</feature>
<feature type="coiled-coil region" evidence="2">
    <location>
        <begin position="419"/>
        <end position="451"/>
    </location>
</feature>
<feature type="compositionally biased region" description="Low complexity" evidence="3">
    <location>
        <begin position="38"/>
        <end position="50"/>
    </location>
</feature>
<feature type="compositionally biased region" description="Low complexity" evidence="3">
    <location>
        <begin position="67"/>
        <end position="83"/>
    </location>
</feature>
<feature type="compositionally biased region" description="Low complexity" evidence="3">
    <location>
        <begin position="134"/>
        <end position="147"/>
    </location>
</feature>
<feature type="compositionally biased region" description="Low complexity" evidence="3">
    <location>
        <begin position="211"/>
        <end position="237"/>
    </location>
</feature>
<feature type="compositionally biased region" description="Low complexity" evidence="3">
    <location>
        <begin position="255"/>
        <end position="279"/>
    </location>
</feature>
<feature type="compositionally biased region" description="Basic and acidic residues" evidence="3">
    <location>
        <begin position="469"/>
        <end position="480"/>
    </location>
</feature>
<feature type="modified residue" description="Phosphoserine" evidence="1">
    <location>
        <position position="408"/>
    </location>
</feature>
<feature type="splice variant" id="VSP_027698" description="In isoform 2 and isoform 3." evidence="5 7">
    <location>
        <position position="145"/>
    </location>
</feature>
<feature type="splice variant" id="VSP_027699" description="In isoform 3 and isoform 4." evidence="6 7">
    <original>NLHTWNSSLLDLE</original>
    <variation>VTSPFTPSLGCLN</variation>
    <location>
        <begin position="182"/>
        <end position="194"/>
    </location>
</feature>
<feature type="splice variant" id="VSP_027700" description="In isoform 3 and isoform 4." evidence="6 7">
    <location>
        <begin position="195"/>
        <end position="480"/>
    </location>
</feature>
<feature type="splice variant" id="VSP_027701" description="In isoform 2." evidence="5">
    <location>
        <begin position="210"/>
        <end position="220"/>
    </location>
</feature>
<feature type="splice variant" id="VSP_027702" description="In isoform 2." evidence="5">
    <original>AESLKAKALPPAAGSVI</original>
    <variation>VSRGREEPGGSWRRGWV</variation>
    <location>
        <begin position="320"/>
        <end position="336"/>
    </location>
</feature>
<feature type="splice variant" id="VSP_027703" description="In isoform 2." evidence="5">
    <location>
        <begin position="337"/>
        <end position="480"/>
    </location>
</feature>
<feature type="sequence variant" id="VAR_056845" description="In dbSNP:rs231219.">
    <original>S</original>
    <variation>R</variation>
    <location>
        <position position="302"/>
    </location>
</feature>
<feature type="sequence variant" id="VAR_061631" description="In dbSNP:rs231217.">
    <original>K</original>
    <variation>N</variation>
    <location>
        <position position="365"/>
    </location>
</feature>
<feature type="sequence conflict" description="In Ref. 1; BAB70878." evidence="8" ref="1">
    <original>P</original>
    <variation>S</variation>
    <location sequence="Q2NL68-2">
        <position position="209"/>
    </location>
</feature>